<keyword id="KW-0009">Actin-binding</keyword>
<keyword id="KW-0020">Allergen</keyword>
<keyword id="KW-0963">Cytoplasm</keyword>
<keyword id="KW-0206">Cytoskeleton</keyword>
<keyword id="KW-1015">Disulfide bond</keyword>
<keyword id="KW-0597">Phosphoprotein</keyword>
<dbReference type="EMBL" id="DQ061977">
    <property type="protein sequence ID" value="AAZ08565.1"/>
    <property type="molecule type" value="mRNA"/>
</dbReference>
<dbReference type="SMR" id="A4GCR6"/>
<dbReference type="Allergome" id="490">
    <property type="allergen name" value="Ole e 2"/>
</dbReference>
<dbReference type="GO" id="GO:0005938">
    <property type="term" value="C:cell cortex"/>
    <property type="evidence" value="ECO:0007669"/>
    <property type="project" value="TreeGrafter"/>
</dbReference>
<dbReference type="GO" id="GO:0005856">
    <property type="term" value="C:cytoskeleton"/>
    <property type="evidence" value="ECO:0007669"/>
    <property type="project" value="UniProtKB-SubCell"/>
</dbReference>
<dbReference type="GO" id="GO:0003785">
    <property type="term" value="F:actin monomer binding"/>
    <property type="evidence" value="ECO:0007669"/>
    <property type="project" value="TreeGrafter"/>
</dbReference>
<dbReference type="CDD" id="cd00148">
    <property type="entry name" value="PROF"/>
    <property type="match status" value="1"/>
</dbReference>
<dbReference type="FunFam" id="3.30.450.30:FF:000001">
    <property type="entry name" value="Profilin"/>
    <property type="match status" value="1"/>
</dbReference>
<dbReference type="Gene3D" id="3.30.450.30">
    <property type="entry name" value="Dynein light chain 2a, cytoplasmic"/>
    <property type="match status" value="1"/>
</dbReference>
<dbReference type="InterPro" id="IPR048278">
    <property type="entry name" value="PFN"/>
</dbReference>
<dbReference type="InterPro" id="IPR005455">
    <property type="entry name" value="PFN_euk"/>
</dbReference>
<dbReference type="InterPro" id="IPR036140">
    <property type="entry name" value="PFN_sf"/>
</dbReference>
<dbReference type="InterPro" id="IPR027310">
    <property type="entry name" value="Profilin_CS"/>
</dbReference>
<dbReference type="PANTHER" id="PTHR11604">
    <property type="entry name" value="PROFILIN"/>
    <property type="match status" value="1"/>
</dbReference>
<dbReference type="PANTHER" id="PTHR11604:SF25">
    <property type="entry name" value="PROFILIN-5"/>
    <property type="match status" value="1"/>
</dbReference>
<dbReference type="Pfam" id="PF00235">
    <property type="entry name" value="Profilin"/>
    <property type="match status" value="1"/>
</dbReference>
<dbReference type="PRINTS" id="PR00392">
    <property type="entry name" value="PROFILIN"/>
</dbReference>
<dbReference type="PRINTS" id="PR01640">
    <property type="entry name" value="PROFILINPLNT"/>
</dbReference>
<dbReference type="SMART" id="SM00392">
    <property type="entry name" value="PROF"/>
    <property type="match status" value="1"/>
</dbReference>
<dbReference type="SUPFAM" id="SSF55770">
    <property type="entry name" value="Profilin (actin-binding protein)"/>
    <property type="match status" value="1"/>
</dbReference>
<dbReference type="PROSITE" id="PS00414">
    <property type="entry name" value="PROFILIN"/>
    <property type="match status" value="1"/>
</dbReference>
<organism>
    <name type="scientific">Olea europaea</name>
    <name type="common">Common olive</name>
    <dbReference type="NCBI Taxonomy" id="4146"/>
    <lineage>
        <taxon>Eukaryota</taxon>
        <taxon>Viridiplantae</taxon>
        <taxon>Streptophyta</taxon>
        <taxon>Embryophyta</taxon>
        <taxon>Tracheophyta</taxon>
        <taxon>Spermatophyta</taxon>
        <taxon>Magnoliopsida</taxon>
        <taxon>eudicotyledons</taxon>
        <taxon>Gunneridae</taxon>
        <taxon>Pentapetalae</taxon>
        <taxon>asterids</taxon>
        <taxon>lamiids</taxon>
        <taxon>Lamiales</taxon>
        <taxon>Oleaceae</taxon>
        <taxon>Oleeae</taxon>
        <taxon>Olea</taxon>
    </lineage>
</organism>
<reference key="1">
    <citation type="journal article" date="2012" name="PLoS ONE">
        <title>Characterization of profilin polymorphism in pollen with a focus on multifunctionality.</title>
        <authorList>
            <person name="Jimenez-Lopez J.C."/>
            <person name="Morales S."/>
            <person name="Castro A.J."/>
            <person name="Volkmann D."/>
            <person name="Rodriguez-Garcia M.I."/>
            <person name="Alche Jde D."/>
        </authorList>
    </citation>
    <scope>NUCLEOTIDE SEQUENCE [MRNA]</scope>
    <scope>POLYMORPHISM</scope>
    <source>
        <strain>cv. Lechin de Sevilla</strain>
        <tissue>Pollen</tissue>
    </source>
</reference>
<reference key="2">
    <citation type="journal article" date="2013" name="PLoS ONE">
        <title>Analysis of the effects of polymorphism on pollen profilin structural functionality and the generation of conformational, T- and B-cell epitopes.</title>
        <authorList>
            <person name="Jimenez-Lopez J.C."/>
            <person name="Rodriguez-Garcia M.I."/>
            <person name="Alche J.D."/>
        </authorList>
    </citation>
    <scope>3D-STRUCTURE MODELING</scope>
    <scope>DISULFIDE BOND</scope>
</reference>
<evidence type="ECO:0000250" key="1"/>
<evidence type="ECO:0000305" key="2"/>
<evidence type="ECO:0000305" key="3">
    <source>
    </source>
</evidence>
<sequence length="134" mass="14413">MSWQGYVDDHLMCDIEGHEGHRLTAAAIVGHDGSVWAQSATFPQFKPEEMNGIMTDFNEPGHLAPTGLHLGGTKYMVIQGEAGAVIRGKKGSGGITIKKTGQALVFGIYEEPVTPGQCNMVVERLGDYLLEQGL</sequence>
<name>PROFF_OLEEU</name>
<protein>
    <recommendedName>
        <fullName>Profilin-3</fullName>
    </recommendedName>
    <alternativeName>
        <fullName>Pollen allergen Ole e 2</fullName>
    </alternativeName>
    <allergenName>Ole e 2</allergenName>
</protein>
<comment type="function">
    <text evidence="1">Binds to actin and affects the structure of the cytoskeleton. At high concentrations, profilin prevents the polymerization of actin, whereas it enhances it at low concentrations (By similarity).</text>
</comment>
<comment type="subunit">
    <text evidence="1">Occurs in many kinds of cells as a complex with monomeric actin in a 1:1 ratio.</text>
</comment>
<comment type="subcellular location">
    <subcellularLocation>
        <location evidence="1">Cytoplasm</location>
        <location evidence="1">Cytoskeleton</location>
    </subcellularLocation>
</comment>
<comment type="PTM">
    <text evidence="1">Phosphorylated by MAP kinases.</text>
</comment>
<comment type="polymorphism">
    <text>Several isoforms of the allergen exist due to polymorphism.</text>
</comment>
<comment type="allergen">
    <text>Causes an allergic reaction in human.</text>
</comment>
<comment type="miscellaneous">
    <text evidence="3">The variability of the residues taking part of IgE-binding epitopes might be responsible of the difference in cross-reactivity among olive pollen cultivars, and between distantly related pollen species, leading to a variable range of allergy reactions among atopic patients.</text>
</comment>
<comment type="similarity">
    <text evidence="2">Belongs to the profilin family.</text>
</comment>
<feature type="initiator methionine" description="Removed" evidence="1">
    <location>
        <position position="1"/>
    </location>
</feature>
<feature type="chain" id="PRO_0000424971" description="Profilin-3">
    <location>
        <begin position="2"/>
        <end position="134"/>
    </location>
</feature>
<feature type="short sequence motif" description="Involved in PIP2 interaction">
    <location>
        <begin position="84"/>
        <end position="100"/>
    </location>
</feature>
<feature type="modified residue" description="Phosphothreonine" evidence="1">
    <location>
        <position position="114"/>
    </location>
</feature>
<feature type="disulfide bond" evidence="3">
    <location>
        <begin position="13"/>
        <end position="118"/>
    </location>
</feature>
<proteinExistence type="evidence at protein level"/>
<accession>A4GCR6</accession>